<dbReference type="EMBL" id="AE000783">
    <property type="status" value="NOT_ANNOTATED_CDS"/>
    <property type="molecule type" value="Genomic_DNA"/>
</dbReference>
<dbReference type="EMBL" id="AJ003222">
    <property type="protein sequence ID" value="CAA06010.1"/>
    <property type="status" value="ALT_INIT"/>
    <property type="molecule type" value="Genomic_DNA"/>
</dbReference>
<dbReference type="Proteomes" id="UP000001807">
    <property type="component" value="Chromosome"/>
</dbReference>
<dbReference type="GO" id="GO:0005886">
    <property type="term" value="C:plasma membrane"/>
    <property type="evidence" value="ECO:0007669"/>
    <property type="project" value="UniProtKB-SubCell"/>
</dbReference>
<dbReference type="CDD" id="cd01467">
    <property type="entry name" value="vWA_BatA_type"/>
    <property type="match status" value="1"/>
</dbReference>
<dbReference type="Gene3D" id="3.40.50.410">
    <property type="entry name" value="von Willebrand factor, type A domain"/>
    <property type="match status" value="1"/>
</dbReference>
<dbReference type="InterPro" id="IPR050768">
    <property type="entry name" value="UPF0353/GerABKA_families"/>
</dbReference>
<dbReference type="InterPro" id="IPR033881">
    <property type="entry name" value="vWA_BatA_type"/>
</dbReference>
<dbReference type="InterPro" id="IPR002035">
    <property type="entry name" value="VWF_A"/>
</dbReference>
<dbReference type="InterPro" id="IPR036465">
    <property type="entry name" value="vWFA_dom_sf"/>
</dbReference>
<dbReference type="PANTHER" id="PTHR22550:SF5">
    <property type="entry name" value="LEUCINE ZIPPER PROTEIN 4"/>
    <property type="match status" value="1"/>
</dbReference>
<dbReference type="PANTHER" id="PTHR22550">
    <property type="entry name" value="SPORE GERMINATION PROTEIN"/>
    <property type="match status" value="1"/>
</dbReference>
<dbReference type="Pfam" id="PF00092">
    <property type="entry name" value="VWA"/>
    <property type="match status" value="1"/>
</dbReference>
<dbReference type="SMART" id="SM00327">
    <property type="entry name" value="VWA"/>
    <property type="match status" value="1"/>
</dbReference>
<dbReference type="SUPFAM" id="SSF53300">
    <property type="entry name" value="vWA-like"/>
    <property type="match status" value="1"/>
</dbReference>
<dbReference type="PROSITE" id="PS50234">
    <property type="entry name" value="VWFA"/>
    <property type="match status" value="1"/>
</dbReference>
<reference key="1">
    <citation type="journal article" date="1997" name="Nature">
        <title>Genomic sequence of a Lyme disease spirochaete, Borrelia burgdorferi.</title>
        <authorList>
            <person name="Fraser C.M."/>
            <person name="Casjens S."/>
            <person name="Huang W.M."/>
            <person name="Sutton G.G."/>
            <person name="Clayton R.A."/>
            <person name="Lathigra R."/>
            <person name="White O."/>
            <person name="Ketchum K.A."/>
            <person name="Dodson R.J."/>
            <person name="Hickey E.K."/>
            <person name="Gwinn M.L."/>
            <person name="Dougherty B.A."/>
            <person name="Tomb J.-F."/>
            <person name="Fleischmann R.D."/>
            <person name="Richardson D.L."/>
            <person name="Peterson J.D."/>
            <person name="Kerlavage A.R."/>
            <person name="Quackenbush J."/>
            <person name="Salzberg S.L."/>
            <person name="Hanson M."/>
            <person name="van Vugt R."/>
            <person name="Palmer N."/>
            <person name="Adams M.D."/>
            <person name="Gocayne J.D."/>
            <person name="Weidman J.F."/>
            <person name="Utterback T.R."/>
            <person name="Watthey L."/>
            <person name="McDonald L.A."/>
            <person name="Artiach P."/>
            <person name="Bowman C."/>
            <person name="Garland S.A."/>
            <person name="Fujii C."/>
            <person name="Cotton M.D."/>
            <person name="Horst K."/>
            <person name="Roberts K.M."/>
            <person name="Hatch B."/>
            <person name="Smith H.O."/>
            <person name="Venter J.C."/>
        </authorList>
    </citation>
    <scope>NUCLEOTIDE SEQUENCE [LARGE SCALE GENOMIC DNA]</scope>
    <source>
        <strain>ATCC 35210 / DSM 4680 / CIP 102532 / B31</strain>
    </source>
</reference>
<reference key="2">
    <citation type="submission" date="1997-12" db="EMBL/GenBank/DDBJ databases">
        <authorList>
            <person name="Old I.G."/>
        </authorList>
    </citation>
    <scope>NUCLEOTIDE SEQUENCE [GENOMIC DNA]</scope>
    <source>
        <strain>212</strain>
    </source>
</reference>
<keyword id="KW-1003">Cell membrane</keyword>
<keyword id="KW-0472">Membrane</keyword>
<keyword id="KW-1185">Reference proteome</keyword>
<keyword id="KW-0812">Transmembrane</keyword>
<keyword id="KW-1133">Transmembrane helix</keyword>
<accession>O51195</accession>
<accession>O50298</accession>
<evidence type="ECO:0000255" key="1"/>
<evidence type="ECO:0000255" key="2">
    <source>
        <dbReference type="PROSITE-ProRule" id="PRU00219"/>
    </source>
</evidence>
<evidence type="ECO:0000305" key="3"/>
<gene>
    <name type="ordered locus">BB_0173</name>
</gene>
<feature type="chain" id="PRO_0000174384" description="Uncharacterized protein BB_0173">
    <location>
        <begin position="1"/>
        <end position="341"/>
    </location>
</feature>
<feature type="transmembrane region" description="Helical" evidence="1">
    <location>
        <begin position="8"/>
        <end position="28"/>
    </location>
</feature>
<feature type="transmembrane region" description="Helical" evidence="1">
    <location>
        <begin position="63"/>
        <end position="83"/>
    </location>
</feature>
<feature type="transmembrane region" description="Helical" evidence="1">
    <location>
        <begin position="171"/>
        <end position="191"/>
    </location>
</feature>
<feature type="transmembrane region" description="Helical" evidence="1">
    <location>
        <begin position="317"/>
        <end position="337"/>
    </location>
</feature>
<feature type="domain" description="VWFA" evidence="2">
    <location>
        <begin position="101"/>
        <end position="305"/>
    </location>
</feature>
<feature type="sequence conflict" description="In Ref. 2; CAA06010." evidence="3" ref="2">
    <original>FLKEIL</original>
    <variation>S</variation>
    <location>
        <begin position="336"/>
        <end position="341"/>
    </location>
</feature>
<comment type="subcellular location">
    <subcellularLocation>
        <location evidence="3">Cell membrane</location>
        <topology evidence="3">Multi-pass membrane protein</topology>
    </subcellularLocation>
</comment>
<comment type="sequence caution" evidence="3">
    <conflict type="erroneous initiation">
        <sequence resource="EMBL-CDS" id="CAA06010"/>
    </conflict>
    <text>Truncated N-terminus.</text>
</comment>
<protein>
    <recommendedName>
        <fullName>Uncharacterized protein BB_0173</fullName>
    </recommendedName>
</protein>
<organism>
    <name type="scientific">Borreliella burgdorferi (strain ATCC 35210 / DSM 4680 / CIP 102532 / B31)</name>
    <name type="common">Borrelia burgdorferi</name>
    <dbReference type="NCBI Taxonomy" id="224326"/>
    <lineage>
        <taxon>Bacteria</taxon>
        <taxon>Pseudomonadati</taxon>
        <taxon>Spirochaetota</taxon>
        <taxon>Spirochaetia</taxon>
        <taxon>Spirochaetales</taxon>
        <taxon>Borreliaceae</taxon>
        <taxon>Borreliella</taxon>
    </lineage>
</organism>
<name>Y173_BORBU</name>
<sequence>MKNLIEVLMLTFNEPLYLFLLVIFPLIIYFNHFLKNRGGKIKFPISLYGNFNSLKLKDYRLNLMYFFTYSFLYLAAMVMVFALAGPSVSKKKMIHLSAGADIVIVLDISPSMGAVEFSSKNRLEFSKELIRGFISQRENDNIGLVAFAKDASIVVPITTDREFFNKKLDDIYIMDLGNGSALGLGISIALSHLKHSEALKRSIVVLTDGVVNSDEIXKDQVINLAQGLNVKIYSIGIGSSEEFSVEFKLRSGKFYQGSFKEVYDPSMLVEISNKTGGLFYSVNDDFSFQFAIQDFSKKENLERKIKIAVDNKDIYKEFLVLAFCLLLVYFIFSKIFLKEIL</sequence>
<proteinExistence type="predicted"/>